<sequence>MALEIDYVLSHISQEDKIALLAGIDFWHTHPIPELNVPSIRSTDGPNGIRGTKFFAGVPAACLPCGTALASTWDQNLLREVGVLIGKECLAKGAHCWLGPTINMPRSPLGGRGFESFAEDPHLAGAMAASMITGCESTGVISAVKHFVGNDQEHERRAVDVLVTQRALREIYLRPFQIVARDAGPGALMTSYNKINGKHVVESKEMLDMVRQEWKWNPLIMSDWLGTYTTIDSMNAGLDLEMPGPSRYRGRYVESALQARLIKESTIDSRARKVLEFVQQASRAPVSAVETGRDYPEDRALNRNLCANSIVLLKNQNDILPLPKTIKKIALVGSHVRTPAISGGGSASLEPYYTVSLYDAVSEALPHTEILYEVGAYAHKMLPVIDRLLTNAVMHFYNEPVGTERILRATQPMSKTAFQLMDFNAPELNRGLFYATLTGDFTPDVSGVWDFGLTVFGTGLLYVDDELVVDNTTHQTRGTAFFGKGTVQELGSKTLNAGQTYKIRIEYGSANTSPMKAIGVVHFGGGAAHLGACLHVDSAEMVRSAVKAAAEADYTILCTGLNHEWESEGFDRSHMDLPPGIDALITSVLDVAANKTVIVNQSGTPVTMPWADRARGIVQAWYGGNETGHGIADVIFGDVNPSGKLPLSWPVDVKHNPAYLNYASVGGRVLYGEDVYVGYRYYEKVGREVLFPFGHGLSYTTFTVSPDVVFSQEVFRPEEPPTAAVKIKNTGKVAGAQVLQLYISAPHSPTPRPTKELHGFTKVLLQPGEERVAHIRMDKYATNFWDEIEGMWKSEEGIYEALIGTSSQNILAKGTFRVDRTRYWLGL</sequence>
<dbReference type="EC" id="3.2.1.21"/>
<dbReference type="EMBL" id="BA000052">
    <property type="protein sequence ID" value="BAE61738.1"/>
    <property type="status" value="ALT_SEQ"/>
    <property type="molecule type" value="Genomic_DNA"/>
</dbReference>
<dbReference type="RefSeq" id="XP_001822871.2">
    <property type="nucleotide sequence ID" value="XM_001822819.2"/>
</dbReference>
<dbReference type="SMR" id="Q2U9M7"/>
<dbReference type="STRING" id="510516.Q2U9M7"/>
<dbReference type="CAZy" id="GH3">
    <property type="family name" value="Glycoside Hydrolase Family 3"/>
</dbReference>
<dbReference type="GlyCosmos" id="Q2U9M7">
    <property type="glycosylation" value="4 sites, No reported glycans"/>
</dbReference>
<dbReference type="EnsemblFungi" id="BAE61738">
    <property type="protein sequence ID" value="BAE61738"/>
    <property type="gene ID" value="AO090166000090"/>
</dbReference>
<dbReference type="VEuPathDB" id="FungiDB:AO090166000090"/>
<dbReference type="UniPathway" id="UPA00696"/>
<dbReference type="Proteomes" id="UP000006564">
    <property type="component" value="Chromosome 4"/>
</dbReference>
<dbReference type="GO" id="GO:0005576">
    <property type="term" value="C:extracellular region"/>
    <property type="evidence" value="ECO:0007669"/>
    <property type="project" value="UniProtKB-SubCell"/>
</dbReference>
<dbReference type="GO" id="GO:0008422">
    <property type="term" value="F:beta-glucosidase activity"/>
    <property type="evidence" value="ECO:0007669"/>
    <property type="project" value="UniProtKB-EC"/>
</dbReference>
<dbReference type="GO" id="GO:0030245">
    <property type="term" value="P:cellulose catabolic process"/>
    <property type="evidence" value="ECO:0007669"/>
    <property type="project" value="UniProtKB-UniPathway"/>
</dbReference>
<dbReference type="FunFam" id="3.20.20.300:FF:000006">
    <property type="entry name" value="Beta-glucosidase H"/>
    <property type="match status" value="1"/>
</dbReference>
<dbReference type="FunFam" id="2.60.40.10:FF:000495">
    <property type="entry name" value="Periplasmic beta-glucosidase"/>
    <property type="match status" value="1"/>
</dbReference>
<dbReference type="Gene3D" id="2.60.120.260">
    <property type="entry name" value="Galactose-binding domain-like"/>
    <property type="match status" value="1"/>
</dbReference>
<dbReference type="Gene3D" id="3.40.50.1700">
    <property type="entry name" value="Glycoside hydrolase family 3 C-terminal domain"/>
    <property type="match status" value="1"/>
</dbReference>
<dbReference type="Gene3D" id="3.20.20.300">
    <property type="entry name" value="Glycoside hydrolase, family 3, N-terminal domain"/>
    <property type="match status" value="1"/>
</dbReference>
<dbReference type="Gene3D" id="2.60.40.10">
    <property type="entry name" value="Immunoglobulins"/>
    <property type="match status" value="1"/>
</dbReference>
<dbReference type="InterPro" id="IPR050288">
    <property type="entry name" value="Cellulose_deg_GH3"/>
</dbReference>
<dbReference type="InterPro" id="IPR026891">
    <property type="entry name" value="Fn3-like"/>
</dbReference>
<dbReference type="InterPro" id="IPR002772">
    <property type="entry name" value="Glyco_hydro_3_C"/>
</dbReference>
<dbReference type="InterPro" id="IPR036881">
    <property type="entry name" value="Glyco_hydro_3_C_sf"/>
</dbReference>
<dbReference type="InterPro" id="IPR001764">
    <property type="entry name" value="Glyco_hydro_3_N"/>
</dbReference>
<dbReference type="InterPro" id="IPR036962">
    <property type="entry name" value="Glyco_hydro_3_N_sf"/>
</dbReference>
<dbReference type="InterPro" id="IPR017853">
    <property type="entry name" value="Glycoside_hydrolase_SF"/>
</dbReference>
<dbReference type="InterPro" id="IPR013783">
    <property type="entry name" value="Ig-like_fold"/>
</dbReference>
<dbReference type="InterPro" id="IPR037524">
    <property type="entry name" value="PA14/GLEYA"/>
</dbReference>
<dbReference type="InterPro" id="IPR011658">
    <property type="entry name" value="PA14_dom"/>
</dbReference>
<dbReference type="PANTHER" id="PTHR42715">
    <property type="entry name" value="BETA-GLUCOSIDASE"/>
    <property type="match status" value="1"/>
</dbReference>
<dbReference type="PANTHER" id="PTHR42715:SF17">
    <property type="entry name" value="BETA-GLUCOSIDASE H-RELATED"/>
    <property type="match status" value="1"/>
</dbReference>
<dbReference type="Pfam" id="PF14310">
    <property type="entry name" value="Fn3-like"/>
    <property type="match status" value="1"/>
</dbReference>
<dbReference type="Pfam" id="PF00933">
    <property type="entry name" value="Glyco_hydro_3"/>
    <property type="match status" value="1"/>
</dbReference>
<dbReference type="Pfam" id="PF01915">
    <property type="entry name" value="Glyco_hydro_3_C"/>
    <property type="match status" value="1"/>
</dbReference>
<dbReference type="Pfam" id="PF07691">
    <property type="entry name" value="PA14"/>
    <property type="match status" value="1"/>
</dbReference>
<dbReference type="PRINTS" id="PR00133">
    <property type="entry name" value="GLHYDRLASE3"/>
</dbReference>
<dbReference type="SMART" id="SM01217">
    <property type="entry name" value="Fn3_like"/>
    <property type="match status" value="1"/>
</dbReference>
<dbReference type="SMART" id="SM00758">
    <property type="entry name" value="PA14"/>
    <property type="match status" value="1"/>
</dbReference>
<dbReference type="SUPFAM" id="SSF51445">
    <property type="entry name" value="(Trans)glycosidases"/>
    <property type="match status" value="1"/>
</dbReference>
<dbReference type="SUPFAM" id="SSF56988">
    <property type="entry name" value="Anthrax protective antigen"/>
    <property type="match status" value="1"/>
</dbReference>
<dbReference type="SUPFAM" id="SSF52279">
    <property type="entry name" value="Beta-D-glucan exohydrolase, C-terminal domain"/>
    <property type="match status" value="1"/>
</dbReference>
<dbReference type="PROSITE" id="PS51820">
    <property type="entry name" value="PA14"/>
    <property type="match status" value="1"/>
</dbReference>
<evidence type="ECO:0000250" key="1"/>
<evidence type="ECO:0000255" key="2"/>
<evidence type="ECO:0000255" key="3">
    <source>
        <dbReference type="PROSITE-ProRule" id="PRU01164"/>
    </source>
</evidence>
<evidence type="ECO:0000305" key="4"/>
<name>BGLH_ASPOR</name>
<keyword id="KW-0119">Carbohydrate metabolism</keyword>
<keyword id="KW-0136">Cellulose degradation</keyword>
<keyword id="KW-0325">Glycoprotein</keyword>
<keyword id="KW-0326">Glycosidase</keyword>
<keyword id="KW-0378">Hydrolase</keyword>
<keyword id="KW-0624">Polysaccharide degradation</keyword>
<keyword id="KW-1185">Reference proteome</keyword>
<keyword id="KW-0964">Secreted</keyword>
<proteinExistence type="inferred from homology"/>
<comment type="function">
    <text evidence="1">Beta-glucosidases are one of a number of cellulolytic enzymes involved in the degradation of cellulosic biomass. Catalyzes the last step releasing glucose from the inhibitory cellobiose (By similarity).</text>
</comment>
<comment type="catalytic activity">
    <reaction>
        <text>Hydrolysis of terminal, non-reducing beta-D-glucosyl residues with release of beta-D-glucose.</text>
        <dbReference type="EC" id="3.2.1.21"/>
    </reaction>
</comment>
<comment type="pathway">
    <text>Glycan metabolism; cellulose degradation.</text>
</comment>
<comment type="subcellular location">
    <subcellularLocation>
        <location evidence="1">Secreted</location>
    </subcellularLocation>
</comment>
<comment type="similarity">
    <text evidence="4">Belongs to the glycosyl hydrolase 3 family.</text>
</comment>
<comment type="sequence caution" evidence="4">
    <conflict type="erroneous gene model prediction">
        <sequence resource="EMBL-CDS" id="BAE61738"/>
    </conflict>
</comment>
<reference key="1">
    <citation type="journal article" date="2005" name="Nature">
        <title>Genome sequencing and analysis of Aspergillus oryzae.</title>
        <authorList>
            <person name="Machida M."/>
            <person name="Asai K."/>
            <person name="Sano M."/>
            <person name="Tanaka T."/>
            <person name="Kumagai T."/>
            <person name="Terai G."/>
            <person name="Kusumoto K."/>
            <person name="Arima T."/>
            <person name="Akita O."/>
            <person name="Kashiwagi Y."/>
            <person name="Abe K."/>
            <person name="Gomi K."/>
            <person name="Horiuchi H."/>
            <person name="Kitamoto K."/>
            <person name="Kobayashi T."/>
            <person name="Takeuchi M."/>
            <person name="Denning D.W."/>
            <person name="Galagan J.E."/>
            <person name="Nierman W.C."/>
            <person name="Yu J."/>
            <person name="Archer D.B."/>
            <person name="Bennett J.W."/>
            <person name="Bhatnagar D."/>
            <person name="Cleveland T.E."/>
            <person name="Fedorova N.D."/>
            <person name="Gotoh O."/>
            <person name="Horikawa H."/>
            <person name="Hosoyama A."/>
            <person name="Ichinomiya M."/>
            <person name="Igarashi R."/>
            <person name="Iwashita K."/>
            <person name="Juvvadi P.R."/>
            <person name="Kato M."/>
            <person name="Kato Y."/>
            <person name="Kin T."/>
            <person name="Kokubun A."/>
            <person name="Maeda H."/>
            <person name="Maeyama N."/>
            <person name="Maruyama J."/>
            <person name="Nagasaki H."/>
            <person name="Nakajima T."/>
            <person name="Oda K."/>
            <person name="Okada K."/>
            <person name="Paulsen I."/>
            <person name="Sakamoto K."/>
            <person name="Sawano T."/>
            <person name="Takahashi M."/>
            <person name="Takase K."/>
            <person name="Terabayashi Y."/>
            <person name="Wortman J.R."/>
            <person name="Yamada O."/>
            <person name="Yamagata Y."/>
            <person name="Anazawa H."/>
            <person name="Hata Y."/>
            <person name="Koide Y."/>
            <person name="Komori T."/>
            <person name="Koyama Y."/>
            <person name="Minetoki T."/>
            <person name="Suharnan S."/>
            <person name="Tanaka A."/>
            <person name="Isono K."/>
            <person name="Kuhara S."/>
            <person name="Ogasawara N."/>
            <person name="Kikuchi H."/>
        </authorList>
    </citation>
    <scope>NUCLEOTIDE SEQUENCE [LARGE SCALE GENOMIC DNA]</scope>
    <source>
        <strain>ATCC 42149 / RIB 40</strain>
    </source>
</reference>
<accession>Q2U9M7</accession>
<protein>
    <recommendedName>
        <fullName>Probable beta-glucosidase H</fullName>
        <ecNumber>3.2.1.21</ecNumber>
    </recommendedName>
    <alternativeName>
        <fullName>Beta-D-glucoside glucohydrolase H</fullName>
    </alternativeName>
    <alternativeName>
        <fullName>Cellobiase H</fullName>
    </alternativeName>
    <alternativeName>
        <fullName>Gentiobiase H</fullName>
    </alternativeName>
</protein>
<gene>
    <name type="primary">bglH</name>
    <name type="ORF">AO090166000090</name>
</gene>
<organism>
    <name type="scientific">Aspergillus oryzae (strain ATCC 42149 / RIB 40)</name>
    <name type="common">Yellow koji mold</name>
    <dbReference type="NCBI Taxonomy" id="510516"/>
    <lineage>
        <taxon>Eukaryota</taxon>
        <taxon>Fungi</taxon>
        <taxon>Dikarya</taxon>
        <taxon>Ascomycota</taxon>
        <taxon>Pezizomycotina</taxon>
        <taxon>Eurotiomycetes</taxon>
        <taxon>Eurotiomycetidae</taxon>
        <taxon>Eurotiales</taxon>
        <taxon>Aspergillaceae</taxon>
        <taxon>Aspergillus</taxon>
        <taxon>Aspergillus subgen. Circumdati</taxon>
    </lineage>
</organism>
<feature type="chain" id="PRO_0000394880" description="Probable beta-glucosidase H">
    <location>
        <begin position="1"/>
        <end position="827"/>
    </location>
</feature>
<feature type="domain" description="PA14" evidence="3">
    <location>
        <begin position="387"/>
        <end position="546"/>
    </location>
</feature>
<feature type="active site" evidence="1">
    <location>
        <position position="223"/>
    </location>
</feature>
<feature type="glycosylation site" description="N-linked (GlcNAc...) asparagine" evidence="2">
    <location>
        <position position="471"/>
    </location>
</feature>
<feature type="glycosylation site" description="N-linked (GlcNAc...) asparagine" evidence="2">
    <location>
        <position position="594"/>
    </location>
</feature>
<feature type="glycosylation site" description="N-linked (GlcNAc...) asparagine" evidence="2">
    <location>
        <position position="600"/>
    </location>
</feature>
<feature type="glycosylation site" description="N-linked (GlcNAc...) asparagine" evidence="2">
    <location>
        <position position="625"/>
    </location>
</feature>